<accession>Q5NMA4</accession>
<evidence type="ECO:0000255" key="1">
    <source>
        <dbReference type="HAMAP-Rule" id="MF_00421"/>
    </source>
</evidence>
<reference key="1">
    <citation type="journal article" date="2005" name="Nat. Biotechnol.">
        <title>The genome sequence of the ethanologenic bacterium Zymomonas mobilis ZM4.</title>
        <authorList>
            <person name="Seo J.-S."/>
            <person name="Chong H."/>
            <person name="Park H.S."/>
            <person name="Yoon K.-O."/>
            <person name="Jung C."/>
            <person name="Kim J.J."/>
            <person name="Hong J.H."/>
            <person name="Kim H."/>
            <person name="Kim J.-H."/>
            <person name="Kil J.-I."/>
            <person name="Park C.J."/>
            <person name="Oh H.-M."/>
            <person name="Lee J.-S."/>
            <person name="Jin S.-J."/>
            <person name="Um H.-W."/>
            <person name="Lee H.-J."/>
            <person name="Oh S.-J."/>
            <person name="Kim J.Y."/>
            <person name="Kang H.L."/>
            <person name="Lee S.Y."/>
            <person name="Lee K.J."/>
            <person name="Kang H.S."/>
        </authorList>
    </citation>
    <scope>NUCLEOTIDE SEQUENCE [LARGE SCALE GENOMIC DNA]</scope>
    <source>
        <strain>ATCC 31821 / ZM4 / CP4</strain>
    </source>
</reference>
<dbReference type="EC" id="6.3.5.3" evidence="1"/>
<dbReference type="EC" id="3.5.1.2" evidence="1"/>
<dbReference type="EMBL" id="AE008692">
    <property type="protein sequence ID" value="AAV90156.1"/>
    <property type="molecule type" value="Genomic_DNA"/>
</dbReference>
<dbReference type="RefSeq" id="WP_011241302.1">
    <property type="nucleotide sequence ID" value="NZ_CP035711.1"/>
</dbReference>
<dbReference type="SMR" id="Q5NMA4"/>
<dbReference type="STRING" id="264203.ZMO1532"/>
<dbReference type="GeneID" id="79905126"/>
<dbReference type="KEGG" id="zmo:ZMO1532"/>
<dbReference type="eggNOG" id="COG0047">
    <property type="taxonomic scope" value="Bacteria"/>
</dbReference>
<dbReference type="HOGENOM" id="CLU_001031_3_1_5"/>
<dbReference type="UniPathway" id="UPA00074">
    <property type="reaction ID" value="UER00128"/>
</dbReference>
<dbReference type="Proteomes" id="UP000001173">
    <property type="component" value="Chromosome"/>
</dbReference>
<dbReference type="GO" id="GO:0005737">
    <property type="term" value="C:cytoplasm"/>
    <property type="evidence" value="ECO:0007669"/>
    <property type="project" value="UniProtKB-SubCell"/>
</dbReference>
<dbReference type="GO" id="GO:0005524">
    <property type="term" value="F:ATP binding"/>
    <property type="evidence" value="ECO:0007669"/>
    <property type="project" value="UniProtKB-KW"/>
</dbReference>
<dbReference type="GO" id="GO:0004359">
    <property type="term" value="F:glutaminase activity"/>
    <property type="evidence" value="ECO:0007669"/>
    <property type="project" value="UniProtKB-EC"/>
</dbReference>
<dbReference type="GO" id="GO:0004642">
    <property type="term" value="F:phosphoribosylformylglycinamidine synthase activity"/>
    <property type="evidence" value="ECO:0007669"/>
    <property type="project" value="UniProtKB-UniRule"/>
</dbReference>
<dbReference type="GO" id="GO:0006189">
    <property type="term" value="P:'de novo' IMP biosynthetic process"/>
    <property type="evidence" value="ECO:0007669"/>
    <property type="project" value="UniProtKB-UniRule"/>
</dbReference>
<dbReference type="CDD" id="cd01740">
    <property type="entry name" value="GATase1_FGAR_AT"/>
    <property type="match status" value="1"/>
</dbReference>
<dbReference type="Gene3D" id="3.40.50.880">
    <property type="match status" value="1"/>
</dbReference>
<dbReference type="HAMAP" id="MF_00421">
    <property type="entry name" value="PurQ"/>
    <property type="match status" value="1"/>
</dbReference>
<dbReference type="InterPro" id="IPR029062">
    <property type="entry name" value="Class_I_gatase-like"/>
</dbReference>
<dbReference type="InterPro" id="IPR010075">
    <property type="entry name" value="PRibForGlyAmidine_synth_PurQ"/>
</dbReference>
<dbReference type="NCBIfam" id="TIGR01737">
    <property type="entry name" value="FGAM_synth_I"/>
    <property type="match status" value="1"/>
</dbReference>
<dbReference type="NCBIfam" id="NF002957">
    <property type="entry name" value="PRK03619.1"/>
    <property type="match status" value="1"/>
</dbReference>
<dbReference type="PANTHER" id="PTHR47552">
    <property type="entry name" value="PHOSPHORIBOSYLFORMYLGLYCINAMIDINE SYNTHASE SUBUNIT PURQ"/>
    <property type="match status" value="1"/>
</dbReference>
<dbReference type="PANTHER" id="PTHR47552:SF1">
    <property type="entry name" value="PHOSPHORIBOSYLFORMYLGLYCINAMIDINE SYNTHASE SUBUNIT PURQ"/>
    <property type="match status" value="1"/>
</dbReference>
<dbReference type="Pfam" id="PF13507">
    <property type="entry name" value="GATase_5"/>
    <property type="match status" value="1"/>
</dbReference>
<dbReference type="PIRSF" id="PIRSF001586">
    <property type="entry name" value="FGAM_synth_I"/>
    <property type="match status" value="1"/>
</dbReference>
<dbReference type="SMART" id="SM01211">
    <property type="entry name" value="GATase_5"/>
    <property type="match status" value="1"/>
</dbReference>
<dbReference type="SUPFAM" id="SSF52317">
    <property type="entry name" value="Class I glutamine amidotransferase-like"/>
    <property type="match status" value="1"/>
</dbReference>
<dbReference type="PROSITE" id="PS51273">
    <property type="entry name" value="GATASE_TYPE_1"/>
    <property type="match status" value="1"/>
</dbReference>
<proteinExistence type="inferred from homology"/>
<sequence length="221" mass="23952">MKAAVLVFPGSNCDRDLAVAIEKICGTKPLMVWHQESELPDDLDLIAVPGGFSYGDYLRSGAMAARSAVMPAVIKQAERGVPVLGICNGFQILTEAGLLPGALMRNAGLSFICRNVGLEIQNTTSPFLRLYKKNQKIHLPVAHHDGNYTADEATLDQLEDEDRVALRYTESVNGSARNIAGVLNKKGNVLGLMPHPERMIEDAHGGKDGYNMFASLMQVMA</sequence>
<feature type="chain" id="PRO_0000100604" description="Phosphoribosylformylglycinamidine synthase subunit PurQ">
    <location>
        <begin position="1"/>
        <end position="221"/>
    </location>
</feature>
<feature type="domain" description="Glutamine amidotransferase type-1" evidence="1">
    <location>
        <begin position="3"/>
        <end position="221"/>
    </location>
</feature>
<feature type="active site" description="Nucleophile" evidence="1">
    <location>
        <position position="87"/>
    </location>
</feature>
<feature type="active site" evidence="1">
    <location>
        <position position="195"/>
    </location>
</feature>
<feature type="active site" evidence="1">
    <location>
        <position position="197"/>
    </location>
</feature>
<protein>
    <recommendedName>
        <fullName evidence="1">Phosphoribosylformylglycinamidine synthase subunit PurQ</fullName>
        <shortName evidence="1">FGAM synthase</shortName>
        <ecNumber evidence="1">6.3.5.3</ecNumber>
    </recommendedName>
    <alternativeName>
        <fullName evidence="1">Formylglycinamide ribonucleotide amidotransferase subunit I</fullName>
        <shortName evidence="1">FGAR amidotransferase I</shortName>
        <shortName evidence="1">FGAR-AT I</shortName>
    </alternativeName>
    <alternativeName>
        <fullName evidence="1">Glutaminase PurQ</fullName>
        <ecNumber evidence="1">3.5.1.2</ecNumber>
    </alternativeName>
    <alternativeName>
        <fullName evidence="1">Phosphoribosylformylglycinamidine synthase subunit I</fullName>
    </alternativeName>
</protein>
<organism>
    <name type="scientific">Zymomonas mobilis subsp. mobilis (strain ATCC 31821 / ZM4 / CP4)</name>
    <dbReference type="NCBI Taxonomy" id="264203"/>
    <lineage>
        <taxon>Bacteria</taxon>
        <taxon>Pseudomonadati</taxon>
        <taxon>Pseudomonadota</taxon>
        <taxon>Alphaproteobacteria</taxon>
        <taxon>Sphingomonadales</taxon>
        <taxon>Zymomonadaceae</taxon>
        <taxon>Zymomonas</taxon>
    </lineage>
</organism>
<gene>
    <name evidence="1" type="primary">purQ</name>
    <name type="ordered locus">ZMO1532</name>
</gene>
<name>PURQ_ZYMMO</name>
<keyword id="KW-0067">ATP-binding</keyword>
<keyword id="KW-0963">Cytoplasm</keyword>
<keyword id="KW-0315">Glutamine amidotransferase</keyword>
<keyword id="KW-0378">Hydrolase</keyword>
<keyword id="KW-0436">Ligase</keyword>
<keyword id="KW-0547">Nucleotide-binding</keyword>
<keyword id="KW-0658">Purine biosynthesis</keyword>
<keyword id="KW-1185">Reference proteome</keyword>
<comment type="function">
    <text evidence="1">Part of the phosphoribosylformylglycinamidine synthase complex involved in the purines biosynthetic pathway. Catalyzes the ATP-dependent conversion of formylglycinamide ribonucleotide (FGAR) and glutamine to yield formylglycinamidine ribonucleotide (FGAM) and glutamate. The FGAM synthase complex is composed of three subunits. PurQ produces an ammonia molecule by converting glutamine to glutamate. PurL transfers the ammonia molecule to FGAR to form FGAM in an ATP-dependent manner. PurS interacts with PurQ and PurL and is thought to assist in the transfer of the ammonia molecule from PurQ to PurL.</text>
</comment>
<comment type="catalytic activity">
    <reaction evidence="1">
        <text>N(2)-formyl-N(1)-(5-phospho-beta-D-ribosyl)glycinamide + L-glutamine + ATP + H2O = 2-formamido-N(1)-(5-O-phospho-beta-D-ribosyl)acetamidine + L-glutamate + ADP + phosphate + H(+)</text>
        <dbReference type="Rhea" id="RHEA:17129"/>
        <dbReference type="ChEBI" id="CHEBI:15377"/>
        <dbReference type="ChEBI" id="CHEBI:15378"/>
        <dbReference type="ChEBI" id="CHEBI:29985"/>
        <dbReference type="ChEBI" id="CHEBI:30616"/>
        <dbReference type="ChEBI" id="CHEBI:43474"/>
        <dbReference type="ChEBI" id="CHEBI:58359"/>
        <dbReference type="ChEBI" id="CHEBI:147286"/>
        <dbReference type="ChEBI" id="CHEBI:147287"/>
        <dbReference type="ChEBI" id="CHEBI:456216"/>
        <dbReference type="EC" id="6.3.5.3"/>
    </reaction>
</comment>
<comment type="catalytic activity">
    <reaction evidence="1">
        <text>L-glutamine + H2O = L-glutamate + NH4(+)</text>
        <dbReference type="Rhea" id="RHEA:15889"/>
        <dbReference type="ChEBI" id="CHEBI:15377"/>
        <dbReference type="ChEBI" id="CHEBI:28938"/>
        <dbReference type="ChEBI" id="CHEBI:29985"/>
        <dbReference type="ChEBI" id="CHEBI:58359"/>
        <dbReference type="EC" id="3.5.1.2"/>
    </reaction>
</comment>
<comment type="pathway">
    <text evidence="1">Purine metabolism; IMP biosynthesis via de novo pathway; 5-amino-1-(5-phospho-D-ribosyl)imidazole from N(2)-formyl-N(1)-(5-phospho-D-ribosyl)glycinamide: step 1/2.</text>
</comment>
<comment type="subunit">
    <text evidence="1">Part of the FGAM synthase complex composed of 1 PurL, 1 PurQ and 2 PurS subunits.</text>
</comment>
<comment type="subcellular location">
    <subcellularLocation>
        <location evidence="1">Cytoplasm</location>
    </subcellularLocation>
</comment>